<keyword id="KW-0028">Amino-acid biosynthesis</keyword>
<keyword id="KW-0032">Aminotransferase</keyword>
<keyword id="KW-0055">Arginine biosynthesis</keyword>
<keyword id="KW-0963">Cytoplasm</keyword>
<keyword id="KW-0663">Pyridoxal phosphate</keyword>
<keyword id="KW-0808">Transferase</keyword>
<organism>
    <name type="scientific">Myxococcus xanthus</name>
    <dbReference type="NCBI Taxonomy" id="34"/>
    <lineage>
        <taxon>Bacteria</taxon>
        <taxon>Pseudomonadati</taxon>
        <taxon>Myxococcota</taxon>
        <taxon>Myxococcia</taxon>
        <taxon>Myxococcales</taxon>
        <taxon>Cystobacterineae</taxon>
        <taxon>Myxococcaceae</taxon>
        <taxon>Myxococcus</taxon>
    </lineage>
</organism>
<sequence length="401" mass="42652">MTALSQSEPSLSASSDSSTDALVQKAKRHLLQNYKQPPFVLARGQGARVWDMDGREYLDLIGGIATCALGHCHPEVVAAAKAQLDSLWHVSNVFYSQPQIDLAAQLTEWSGLSRAFFCNSGAEANEALLKLTRKVMKDRGTPERFEVISFDSSFHGRTLATVTATGQAKYQKGFEPLPAGFTHVPYGDLEAVRKAVGPATAAILVEPIQGEGGVRMAPLGFLVGLRALCDEHGLLLLVDEVQTGMGRTGKPFGFMHEGIVPDGISVAKALGNGLPIGAMLCKEELGASLTPGTHGSTFGGNPVAAAAANAVVRILRRPGFLDEVQEKGAYLLARARELQGRLPAGRIQAVRGQGLLVGVQLDHKVAPVIAQVHEEGLLVNPAGDRTMLFAPPFIVTVRELD</sequence>
<gene>
    <name evidence="1" type="primary">argD</name>
</gene>
<reference key="1">
    <citation type="journal article" date="2003" name="Mol. Microbiol.">
        <title>Identification of genes required for adventurous gliding motility in Myxococcus xanthus with the transposable element mariner.</title>
        <authorList>
            <person name="Youderian P.A."/>
            <person name="Burke N."/>
            <person name="White D.J."/>
            <person name="Hartzell P.L."/>
        </authorList>
    </citation>
    <scope>NUCLEOTIDE SEQUENCE [GENOMIC DNA]</scope>
</reference>
<protein>
    <recommendedName>
        <fullName evidence="1">Acetylornithine aminotransferase</fullName>
        <shortName evidence="1">ACOAT</shortName>
        <ecNumber evidence="1">2.6.1.11</ecNumber>
    </recommendedName>
</protein>
<accession>P59318</accession>
<comment type="catalytic activity">
    <reaction evidence="1">
        <text>N(2)-acetyl-L-ornithine + 2-oxoglutarate = N-acetyl-L-glutamate 5-semialdehyde + L-glutamate</text>
        <dbReference type="Rhea" id="RHEA:18049"/>
        <dbReference type="ChEBI" id="CHEBI:16810"/>
        <dbReference type="ChEBI" id="CHEBI:29123"/>
        <dbReference type="ChEBI" id="CHEBI:29985"/>
        <dbReference type="ChEBI" id="CHEBI:57805"/>
        <dbReference type="EC" id="2.6.1.11"/>
    </reaction>
</comment>
<comment type="cofactor">
    <cofactor evidence="1">
        <name>pyridoxal 5'-phosphate</name>
        <dbReference type="ChEBI" id="CHEBI:597326"/>
    </cofactor>
    <text evidence="1">Binds 1 pyridoxal phosphate per subunit.</text>
</comment>
<comment type="pathway">
    <text evidence="1">Amino-acid biosynthesis; L-arginine biosynthesis; N(2)-acetyl-L-ornithine from L-glutamate: step 4/4.</text>
</comment>
<comment type="subunit">
    <text evidence="1">Homodimer.</text>
</comment>
<comment type="subcellular location">
    <subcellularLocation>
        <location evidence="1">Cytoplasm</location>
    </subcellularLocation>
</comment>
<comment type="miscellaneous">
    <text evidence="1">May also have succinyldiaminopimelate aminotransferase activity, thus carrying out the corresponding step in lysine biosynthesis.</text>
</comment>
<comment type="similarity">
    <text evidence="1">Belongs to the class-III pyridoxal-phosphate-dependent aminotransferase family. ArgD subfamily.</text>
</comment>
<name>ARGD_MYXXA</name>
<feature type="chain" id="PRO_0000112758" description="Acetylornithine aminotransferase">
    <location>
        <begin position="1"/>
        <end position="401"/>
    </location>
</feature>
<feature type="binding site" evidence="1">
    <location>
        <begin position="121"/>
        <end position="122"/>
    </location>
    <ligand>
        <name>pyridoxal 5'-phosphate</name>
        <dbReference type="ChEBI" id="CHEBI:597326"/>
    </ligand>
</feature>
<feature type="binding site" evidence="1">
    <location>
        <position position="154"/>
    </location>
    <ligand>
        <name>pyridoxal 5'-phosphate</name>
        <dbReference type="ChEBI" id="CHEBI:597326"/>
    </ligand>
</feature>
<feature type="binding site" evidence="1">
    <location>
        <position position="157"/>
    </location>
    <ligand>
        <name>N(2)-acetyl-L-ornithine</name>
        <dbReference type="ChEBI" id="CHEBI:57805"/>
    </ligand>
</feature>
<feature type="binding site" evidence="1">
    <location>
        <begin position="239"/>
        <end position="242"/>
    </location>
    <ligand>
        <name>pyridoxal 5'-phosphate</name>
        <dbReference type="ChEBI" id="CHEBI:597326"/>
    </ligand>
</feature>
<feature type="binding site" evidence="1">
    <location>
        <position position="296"/>
    </location>
    <ligand>
        <name>N(2)-acetyl-L-ornithine</name>
        <dbReference type="ChEBI" id="CHEBI:57805"/>
    </ligand>
</feature>
<feature type="binding site" evidence="1">
    <location>
        <position position="297"/>
    </location>
    <ligand>
        <name>pyridoxal 5'-phosphate</name>
        <dbReference type="ChEBI" id="CHEBI:597326"/>
    </ligand>
</feature>
<feature type="modified residue" description="N6-(pyridoxal phosphate)lysine" evidence="1">
    <location>
        <position position="268"/>
    </location>
</feature>
<proteinExistence type="inferred from homology"/>
<dbReference type="EC" id="2.6.1.11" evidence="1"/>
<dbReference type="EMBL" id="AY204472">
    <property type="protein sequence ID" value="AAO22926.1"/>
    <property type="molecule type" value="Genomic_DNA"/>
</dbReference>
<dbReference type="SMR" id="P59318"/>
<dbReference type="UniPathway" id="UPA00068">
    <property type="reaction ID" value="UER00109"/>
</dbReference>
<dbReference type="GO" id="GO:0005737">
    <property type="term" value="C:cytoplasm"/>
    <property type="evidence" value="ECO:0007669"/>
    <property type="project" value="UniProtKB-SubCell"/>
</dbReference>
<dbReference type="GO" id="GO:0042802">
    <property type="term" value="F:identical protein binding"/>
    <property type="evidence" value="ECO:0007669"/>
    <property type="project" value="TreeGrafter"/>
</dbReference>
<dbReference type="GO" id="GO:0003992">
    <property type="term" value="F:N2-acetyl-L-ornithine:2-oxoglutarate 5-aminotransferase activity"/>
    <property type="evidence" value="ECO:0007669"/>
    <property type="project" value="UniProtKB-UniRule"/>
</dbReference>
<dbReference type="GO" id="GO:0030170">
    <property type="term" value="F:pyridoxal phosphate binding"/>
    <property type="evidence" value="ECO:0007669"/>
    <property type="project" value="InterPro"/>
</dbReference>
<dbReference type="GO" id="GO:0006526">
    <property type="term" value="P:L-arginine biosynthetic process"/>
    <property type="evidence" value="ECO:0007669"/>
    <property type="project" value="UniProtKB-UniRule"/>
</dbReference>
<dbReference type="CDD" id="cd00610">
    <property type="entry name" value="OAT_like"/>
    <property type="match status" value="1"/>
</dbReference>
<dbReference type="FunFam" id="3.40.640.10:FF:000004">
    <property type="entry name" value="Acetylornithine aminotransferase"/>
    <property type="match status" value="1"/>
</dbReference>
<dbReference type="Gene3D" id="3.90.1150.10">
    <property type="entry name" value="Aspartate Aminotransferase, domain 1"/>
    <property type="match status" value="1"/>
</dbReference>
<dbReference type="Gene3D" id="3.40.640.10">
    <property type="entry name" value="Type I PLP-dependent aspartate aminotransferase-like (Major domain)"/>
    <property type="match status" value="1"/>
</dbReference>
<dbReference type="HAMAP" id="MF_01107">
    <property type="entry name" value="ArgD_aminotrans_3"/>
    <property type="match status" value="1"/>
</dbReference>
<dbReference type="InterPro" id="IPR004636">
    <property type="entry name" value="AcOrn/SuccOrn_fam"/>
</dbReference>
<dbReference type="InterPro" id="IPR005814">
    <property type="entry name" value="Aminotrans_3"/>
</dbReference>
<dbReference type="InterPro" id="IPR049704">
    <property type="entry name" value="Aminotrans_3_PPA_site"/>
</dbReference>
<dbReference type="InterPro" id="IPR050103">
    <property type="entry name" value="Class-III_PLP-dep_AT"/>
</dbReference>
<dbReference type="InterPro" id="IPR015424">
    <property type="entry name" value="PyrdxlP-dep_Trfase"/>
</dbReference>
<dbReference type="InterPro" id="IPR015421">
    <property type="entry name" value="PyrdxlP-dep_Trfase_major"/>
</dbReference>
<dbReference type="InterPro" id="IPR015422">
    <property type="entry name" value="PyrdxlP-dep_Trfase_small"/>
</dbReference>
<dbReference type="NCBIfam" id="TIGR00707">
    <property type="entry name" value="argD"/>
    <property type="match status" value="1"/>
</dbReference>
<dbReference type="NCBIfam" id="NF002325">
    <property type="entry name" value="PRK01278.1"/>
    <property type="match status" value="1"/>
</dbReference>
<dbReference type="PANTHER" id="PTHR11986:SF79">
    <property type="entry name" value="ACETYLORNITHINE AMINOTRANSFERASE, MITOCHONDRIAL"/>
    <property type="match status" value="1"/>
</dbReference>
<dbReference type="PANTHER" id="PTHR11986">
    <property type="entry name" value="AMINOTRANSFERASE CLASS III"/>
    <property type="match status" value="1"/>
</dbReference>
<dbReference type="Pfam" id="PF00202">
    <property type="entry name" value="Aminotran_3"/>
    <property type="match status" value="1"/>
</dbReference>
<dbReference type="PIRSF" id="PIRSF000521">
    <property type="entry name" value="Transaminase_4ab_Lys_Orn"/>
    <property type="match status" value="1"/>
</dbReference>
<dbReference type="SUPFAM" id="SSF53383">
    <property type="entry name" value="PLP-dependent transferases"/>
    <property type="match status" value="1"/>
</dbReference>
<dbReference type="PROSITE" id="PS00600">
    <property type="entry name" value="AA_TRANSFER_CLASS_3"/>
    <property type="match status" value="1"/>
</dbReference>
<evidence type="ECO:0000255" key="1">
    <source>
        <dbReference type="HAMAP-Rule" id="MF_01107"/>
    </source>
</evidence>